<gene>
    <name evidence="1" type="primary">folD</name>
    <name type="ordered locus">OCAR_4309</name>
    <name type="ordered locus">OCA5_c02150</name>
</gene>
<feature type="chain" id="PRO_1000147502" description="Bifunctional protein FolD">
    <location>
        <begin position="1"/>
        <end position="294"/>
    </location>
</feature>
<feature type="binding site" evidence="1">
    <location>
        <begin position="166"/>
        <end position="168"/>
    </location>
    <ligand>
        <name>NADP(+)</name>
        <dbReference type="ChEBI" id="CHEBI:58349"/>
    </ligand>
</feature>
<feature type="binding site" evidence="1">
    <location>
        <position position="191"/>
    </location>
    <ligand>
        <name>NADP(+)</name>
        <dbReference type="ChEBI" id="CHEBI:58349"/>
    </ligand>
</feature>
<feature type="binding site" evidence="1">
    <location>
        <position position="232"/>
    </location>
    <ligand>
        <name>NADP(+)</name>
        <dbReference type="ChEBI" id="CHEBI:58349"/>
    </ligand>
</feature>
<proteinExistence type="inferred from homology"/>
<comment type="function">
    <text evidence="1">Catalyzes the oxidation of 5,10-methylenetetrahydrofolate to 5,10-methenyltetrahydrofolate and then the hydrolysis of 5,10-methenyltetrahydrofolate to 10-formyltetrahydrofolate.</text>
</comment>
<comment type="catalytic activity">
    <reaction evidence="1">
        <text>(6R)-5,10-methylene-5,6,7,8-tetrahydrofolate + NADP(+) = (6R)-5,10-methenyltetrahydrofolate + NADPH</text>
        <dbReference type="Rhea" id="RHEA:22812"/>
        <dbReference type="ChEBI" id="CHEBI:15636"/>
        <dbReference type="ChEBI" id="CHEBI:57455"/>
        <dbReference type="ChEBI" id="CHEBI:57783"/>
        <dbReference type="ChEBI" id="CHEBI:58349"/>
        <dbReference type="EC" id="1.5.1.5"/>
    </reaction>
</comment>
<comment type="catalytic activity">
    <reaction evidence="1">
        <text>(6R)-5,10-methenyltetrahydrofolate + H2O = (6R)-10-formyltetrahydrofolate + H(+)</text>
        <dbReference type="Rhea" id="RHEA:23700"/>
        <dbReference type="ChEBI" id="CHEBI:15377"/>
        <dbReference type="ChEBI" id="CHEBI:15378"/>
        <dbReference type="ChEBI" id="CHEBI:57455"/>
        <dbReference type="ChEBI" id="CHEBI:195366"/>
        <dbReference type="EC" id="3.5.4.9"/>
    </reaction>
</comment>
<comment type="pathway">
    <text evidence="1">One-carbon metabolism; tetrahydrofolate interconversion.</text>
</comment>
<comment type="subunit">
    <text evidence="1">Homodimer.</text>
</comment>
<comment type="similarity">
    <text evidence="1">Belongs to the tetrahydrofolate dehydrogenase/cyclohydrolase family.</text>
</comment>
<dbReference type="EC" id="1.5.1.5" evidence="1"/>
<dbReference type="EC" id="3.5.4.9" evidence="1"/>
<dbReference type="EMBL" id="CP001196">
    <property type="protein sequence ID" value="ACI91458.1"/>
    <property type="molecule type" value="Genomic_DNA"/>
</dbReference>
<dbReference type="EMBL" id="CP002826">
    <property type="protein sequence ID" value="AEI04944.1"/>
    <property type="molecule type" value="Genomic_DNA"/>
</dbReference>
<dbReference type="RefSeq" id="WP_012561489.1">
    <property type="nucleotide sequence ID" value="NC_015684.1"/>
</dbReference>
<dbReference type="SMR" id="B6JAU5"/>
<dbReference type="STRING" id="504832.OCA5_c02150"/>
<dbReference type="KEGG" id="oca:OCAR_4309"/>
<dbReference type="KEGG" id="ocg:OCA5_c02150"/>
<dbReference type="PATRIC" id="fig|504832.7.peg.225"/>
<dbReference type="eggNOG" id="COG0190">
    <property type="taxonomic scope" value="Bacteria"/>
</dbReference>
<dbReference type="HOGENOM" id="CLU_034045_2_1_5"/>
<dbReference type="OrthoDB" id="9803580at2"/>
<dbReference type="UniPathway" id="UPA00193"/>
<dbReference type="Proteomes" id="UP000007730">
    <property type="component" value="Chromosome"/>
</dbReference>
<dbReference type="GO" id="GO:0005829">
    <property type="term" value="C:cytosol"/>
    <property type="evidence" value="ECO:0007669"/>
    <property type="project" value="TreeGrafter"/>
</dbReference>
<dbReference type="GO" id="GO:0004477">
    <property type="term" value="F:methenyltetrahydrofolate cyclohydrolase activity"/>
    <property type="evidence" value="ECO:0007669"/>
    <property type="project" value="UniProtKB-UniRule"/>
</dbReference>
<dbReference type="GO" id="GO:0004488">
    <property type="term" value="F:methylenetetrahydrofolate dehydrogenase (NADP+) activity"/>
    <property type="evidence" value="ECO:0007669"/>
    <property type="project" value="UniProtKB-UniRule"/>
</dbReference>
<dbReference type="GO" id="GO:0000105">
    <property type="term" value="P:L-histidine biosynthetic process"/>
    <property type="evidence" value="ECO:0007669"/>
    <property type="project" value="UniProtKB-KW"/>
</dbReference>
<dbReference type="GO" id="GO:0009086">
    <property type="term" value="P:methionine biosynthetic process"/>
    <property type="evidence" value="ECO:0007669"/>
    <property type="project" value="UniProtKB-KW"/>
</dbReference>
<dbReference type="GO" id="GO:0006164">
    <property type="term" value="P:purine nucleotide biosynthetic process"/>
    <property type="evidence" value="ECO:0007669"/>
    <property type="project" value="UniProtKB-KW"/>
</dbReference>
<dbReference type="GO" id="GO:0035999">
    <property type="term" value="P:tetrahydrofolate interconversion"/>
    <property type="evidence" value="ECO:0007669"/>
    <property type="project" value="UniProtKB-UniRule"/>
</dbReference>
<dbReference type="CDD" id="cd01080">
    <property type="entry name" value="NAD_bind_m-THF_DH_Cyclohyd"/>
    <property type="match status" value="1"/>
</dbReference>
<dbReference type="FunFam" id="3.40.50.720:FF:000006">
    <property type="entry name" value="Bifunctional protein FolD"/>
    <property type="match status" value="1"/>
</dbReference>
<dbReference type="FunFam" id="3.40.50.10860:FF:000005">
    <property type="entry name" value="C-1-tetrahydrofolate synthase, cytoplasmic, putative"/>
    <property type="match status" value="1"/>
</dbReference>
<dbReference type="Gene3D" id="3.40.50.10860">
    <property type="entry name" value="Leucine Dehydrogenase, chain A, domain 1"/>
    <property type="match status" value="1"/>
</dbReference>
<dbReference type="Gene3D" id="3.40.50.720">
    <property type="entry name" value="NAD(P)-binding Rossmann-like Domain"/>
    <property type="match status" value="1"/>
</dbReference>
<dbReference type="HAMAP" id="MF_01576">
    <property type="entry name" value="THF_DHG_CYH"/>
    <property type="match status" value="1"/>
</dbReference>
<dbReference type="InterPro" id="IPR046346">
    <property type="entry name" value="Aminoacid_DH-like_N_sf"/>
</dbReference>
<dbReference type="InterPro" id="IPR036291">
    <property type="entry name" value="NAD(P)-bd_dom_sf"/>
</dbReference>
<dbReference type="InterPro" id="IPR000672">
    <property type="entry name" value="THF_DH/CycHdrlase"/>
</dbReference>
<dbReference type="InterPro" id="IPR020630">
    <property type="entry name" value="THF_DH/CycHdrlase_cat_dom"/>
</dbReference>
<dbReference type="InterPro" id="IPR020867">
    <property type="entry name" value="THF_DH/CycHdrlase_CS"/>
</dbReference>
<dbReference type="InterPro" id="IPR020631">
    <property type="entry name" value="THF_DH/CycHdrlase_NAD-bd_dom"/>
</dbReference>
<dbReference type="NCBIfam" id="NF010783">
    <property type="entry name" value="PRK14186.1"/>
    <property type="match status" value="1"/>
</dbReference>
<dbReference type="NCBIfam" id="NF010785">
    <property type="entry name" value="PRK14188.1"/>
    <property type="match status" value="1"/>
</dbReference>
<dbReference type="PANTHER" id="PTHR48099:SF5">
    <property type="entry name" value="C-1-TETRAHYDROFOLATE SYNTHASE, CYTOPLASMIC"/>
    <property type="match status" value="1"/>
</dbReference>
<dbReference type="PANTHER" id="PTHR48099">
    <property type="entry name" value="C-1-TETRAHYDROFOLATE SYNTHASE, CYTOPLASMIC-RELATED"/>
    <property type="match status" value="1"/>
</dbReference>
<dbReference type="Pfam" id="PF00763">
    <property type="entry name" value="THF_DHG_CYH"/>
    <property type="match status" value="1"/>
</dbReference>
<dbReference type="Pfam" id="PF02882">
    <property type="entry name" value="THF_DHG_CYH_C"/>
    <property type="match status" value="1"/>
</dbReference>
<dbReference type="PRINTS" id="PR00085">
    <property type="entry name" value="THFDHDRGNASE"/>
</dbReference>
<dbReference type="SUPFAM" id="SSF53223">
    <property type="entry name" value="Aminoacid dehydrogenase-like, N-terminal domain"/>
    <property type="match status" value="1"/>
</dbReference>
<dbReference type="SUPFAM" id="SSF51735">
    <property type="entry name" value="NAD(P)-binding Rossmann-fold domains"/>
    <property type="match status" value="1"/>
</dbReference>
<dbReference type="PROSITE" id="PS00766">
    <property type="entry name" value="THF_DHG_CYH_1"/>
    <property type="match status" value="1"/>
</dbReference>
<keyword id="KW-0028">Amino-acid biosynthesis</keyword>
<keyword id="KW-0368">Histidine biosynthesis</keyword>
<keyword id="KW-0378">Hydrolase</keyword>
<keyword id="KW-0486">Methionine biosynthesis</keyword>
<keyword id="KW-0511">Multifunctional enzyme</keyword>
<keyword id="KW-0521">NADP</keyword>
<keyword id="KW-0554">One-carbon metabolism</keyword>
<keyword id="KW-0560">Oxidoreductase</keyword>
<keyword id="KW-0658">Purine biosynthesis</keyword>
<keyword id="KW-1185">Reference proteome</keyword>
<sequence length="294" mass="30313">MPATRIDGKAIAAKLREDVAAEVARLKRDHDLTPGLAVVLIGNDPASEVYVGSKTKQTVAAGMASFEHKLAADTPQAQVLALIARLNRDPAVHGILVQLPLPKGLDATIIVNAIDPAKDVDGLHPVNAGRLASGLPALTPCTPLGCIILAKTVHASLEGMNAIVLGRSNLVGRPLVQLLLNENATVTIAHSRTRNLPALCRQADLVFAAVGRPEMVKGDWIKPGATVIDVGINRLPGEGGKSRLVGDVAYAEAMEVAGAVTPVPGGVGQMTVACLLVNTVRAACAIKGLSAPSV</sequence>
<protein>
    <recommendedName>
        <fullName evidence="1">Bifunctional protein FolD</fullName>
    </recommendedName>
    <domain>
        <recommendedName>
            <fullName evidence="1">Methylenetetrahydrofolate dehydrogenase</fullName>
            <ecNumber evidence="1">1.5.1.5</ecNumber>
        </recommendedName>
    </domain>
    <domain>
        <recommendedName>
            <fullName evidence="1">Methenyltetrahydrofolate cyclohydrolase</fullName>
            <ecNumber evidence="1">3.5.4.9</ecNumber>
        </recommendedName>
    </domain>
</protein>
<evidence type="ECO:0000255" key="1">
    <source>
        <dbReference type="HAMAP-Rule" id="MF_01576"/>
    </source>
</evidence>
<reference key="1">
    <citation type="journal article" date="2008" name="J. Bacteriol.">
        <title>Genome sequence of the chemolithoautotrophic bacterium Oligotropha carboxidovorans OM5T.</title>
        <authorList>
            <person name="Paul D."/>
            <person name="Bridges S."/>
            <person name="Burgess S.C."/>
            <person name="Dandass Y."/>
            <person name="Lawrence M.L."/>
        </authorList>
    </citation>
    <scope>NUCLEOTIDE SEQUENCE [LARGE SCALE GENOMIC DNA]</scope>
    <source>
        <strain>ATCC 49405 / DSM 1227 / KCTC 32145 / OM5</strain>
    </source>
</reference>
<reference key="2">
    <citation type="journal article" date="2011" name="J. Bacteriol.">
        <title>Complete genome sequences of the chemolithoautotrophic Oligotropha carboxidovorans strains OM4 and OM5.</title>
        <authorList>
            <person name="Volland S."/>
            <person name="Rachinger M."/>
            <person name="Strittmatter A."/>
            <person name="Daniel R."/>
            <person name="Gottschalk G."/>
            <person name="Meyer O."/>
        </authorList>
    </citation>
    <scope>NUCLEOTIDE SEQUENCE [LARGE SCALE GENOMIC DNA]</scope>
    <source>
        <strain>ATCC 49405 / DSM 1227 / KCTC 32145 / OM5</strain>
    </source>
</reference>
<name>FOLD_AFIC5</name>
<accession>B6JAU5</accession>
<accession>F8BSR7</accession>
<organism>
    <name type="scientific">Afipia carboxidovorans (strain ATCC 49405 / DSM 1227 / KCTC 32145 / OM5)</name>
    <name type="common">Oligotropha carboxidovorans</name>
    <dbReference type="NCBI Taxonomy" id="504832"/>
    <lineage>
        <taxon>Bacteria</taxon>
        <taxon>Pseudomonadati</taxon>
        <taxon>Pseudomonadota</taxon>
        <taxon>Alphaproteobacteria</taxon>
        <taxon>Hyphomicrobiales</taxon>
        <taxon>Nitrobacteraceae</taxon>
        <taxon>Afipia</taxon>
    </lineage>
</organism>